<comment type="function">
    <text evidence="5 6 7">Probable ATP-dependent zinc metallopeptidase. Involved in the assembly and/or stability of the complexes I and V. Involved in thermotolerance but not in high light stress resistance or in the assembly/stability of the complexes I and V of the mitochondrial oxidative phosphorylation system.</text>
</comment>
<comment type="cofactor">
    <cofactor evidence="8">
        <name>Zn(2+)</name>
        <dbReference type="ChEBI" id="CHEBI:29105"/>
    </cofactor>
    <text evidence="8">Binds 1 zinc ion per subunit.</text>
</comment>
<comment type="subunit">
    <text evidence="9">Homooligomer.</text>
</comment>
<comment type="subcellular location">
    <subcellularLocation>
        <location>Mitochondrion inner membrane</location>
        <topology>Single-pass membrane protein</topology>
        <orientation>Intermembrane side</orientation>
    </subcellularLocation>
    <subcellularLocation>
        <location>Plastid</location>
        <location>Chloroplast thylakoid membrane</location>
        <topology>Single-pass membrane protein</topology>
        <orientation>Stromal side</orientation>
    </subcellularLocation>
</comment>
<comment type="induction">
    <text evidence="4">By high light.</text>
</comment>
<comment type="miscellaneous">
    <text>In contrast to fungi and metazoa, plant mitochondria have more than one i-AAA-like complexes.</text>
</comment>
<comment type="similarity">
    <text evidence="8">In the N-terminal section; belongs to the AAA ATPase family.</text>
</comment>
<comment type="similarity">
    <text evidence="8">In the C-terminal section; belongs to the peptidase M41 family.</text>
</comment>
<reference key="1">
    <citation type="submission" date="1999-04" db="EMBL/GenBank/DDBJ databases">
        <title>Structural analysis of Arabidopsis thaliana chromosome 5. XI.</title>
        <authorList>
            <person name="Kaneko T."/>
            <person name="Katoh T."/>
            <person name="Asamizu E."/>
            <person name="Sato S."/>
            <person name="Nakamura Y."/>
            <person name="Kotani H."/>
            <person name="Tabata S."/>
        </authorList>
    </citation>
    <scope>NUCLEOTIDE SEQUENCE [LARGE SCALE GENOMIC DNA]</scope>
    <source>
        <strain>cv. Columbia</strain>
    </source>
</reference>
<reference key="2">
    <citation type="journal article" date="2017" name="Plant J.">
        <title>Araport11: a complete reannotation of the Arabidopsis thaliana reference genome.</title>
        <authorList>
            <person name="Cheng C.Y."/>
            <person name="Krishnakumar V."/>
            <person name="Chan A.P."/>
            <person name="Thibaud-Nissen F."/>
            <person name="Schobel S."/>
            <person name="Town C.D."/>
        </authorList>
    </citation>
    <scope>GENOME REANNOTATION</scope>
    <source>
        <strain>cv. Columbia</strain>
    </source>
</reference>
<reference key="3">
    <citation type="journal article" date="2003" name="Science">
        <title>Empirical analysis of transcriptional activity in the Arabidopsis genome.</title>
        <authorList>
            <person name="Yamada K."/>
            <person name="Lim J."/>
            <person name="Dale J.M."/>
            <person name="Chen H."/>
            <person name="Shinn P."/>
            <person name="Palm C.J."/>
            <person name="Southwick A.M."/>
            <person name="Wu H.C."/>
            <person name="Kim C.J."/>
            <person name="Nguyen M."/>
            <person name="Pham P.K."/>
            <person name="Cheuk R.F."/>
            <person name="Karlin-Newmann G."/>
            <person name="Liu S.X."/>
            <person name="Lam B."/>
            <person name="Sakano H."/>
            <person name="Wu T."/>
            <person name="Yu G."/>
            <person name="Miranda M."/>
            <person name="Quach H.L."/>
            <person name="Tripp M."/>
            <person name="Chang C.H."/>
            <person name="Lee J.M."/>
            <person name="Toriumi M.J."/>
            <person name="Chan M.M."/>
            <person name="Tang C.C."/>
            <person name="Onodera C.S."/>
            <person name="Deng J.M."/>
            <person name="Akiyama K."/>
            <person name="Ansari Y."/>
            <person name="Arakawa T."/>
            <person name="Banh J."/>
            <person name="Banno F."/>
            <person name="Bowser L."/>
            <person name="Brooks S.Y."/>
            <person name="Carninci P."/>
            <person name="Chao Q."/>
            <person name="Choy N."/>
            <person name="Enju A."/>
            <person name="Goldsmith A.D."/>
            <person name="Gurjal M."/>
            <person name="Hansen N.F."/>
            <person name="Hayashizaki Y."/>
            <person name="Johnson-Hopson C."/>
            <person name="Hsuan V.W."/>
            <person name="Iida K."/>
            <person name="Karnes M."/>
            <person name="Khan S."/>
            <person name="Koesema E."/>
            <person name="Ishida J."/>
            <person name="Jiang P.X."/>
            <person name="Jones T."/>
            <person name="Kawai J."/>
            <person name="Kamiya A."/>
            <person name="Meyers C."/>
            <person name="Nakajima M."/>
            <person name="Narusaka M."/>
            <person name="Seki M."/>
            <person name="Sakurai T."/>
            <person name="Satou M."/>
            <person name="Tamse R."/>
            <person name="Vaysberg M."/>
            <person name="Wallender E.K."/>
            <person name="Wong C."/>
            <person name="Yamamura Y."/>
            <person name="Yuan S."/>
            <person name="Shinozaki K."/>
            <person name="Davis R.W."/>
            <person name="Theologis A."/>
            <person name="Ecker J.R."/>
        </authorList>
    </citation>
    <scope>NUCLEOTIDE SEQUENCE [LARGE SCALE MRNA]</scope>
    <source>
        <strain>cv. Columbia</strain>
    </source>
</reference>
<reference key="4">
    <citation type="journal article" date="2003" name="Plant Cell">
        <title>Coordinated regulation and complex formation of yellow variegated1 and yellow variegated2, chloroplastic FtsH metalloproteases involved in the repair cycle of photosystem II in Arabidopsis thylakoid membranes.</title>
        <authorList>
            <person name="Sakamoto W."/>
            <person name="Zaltsman A."/>
            <person name="Adam Z."/>
            <person name="Takahashi Y."/>
        </authorList>
    </citation>
    <scope>SUBCELLULAR LOCATION</scope>
</reference>
<reference key="5">
    <citation type="journal article" date="2004" name="Plant Cell">
        <title>Experimental analysis of the Arabidopsis mitochondrial proteome highlights signaling and regulatory components, provides assessment of targeting prediction programs, and indicates plant-specific mitochondrial proteins.</title>
        <authorList>
            <person name="Heazlewood J.L."/>
            <person name="Tonti-Filippini J.S."/>
            <person name="Gout A.M."/>
            <person name="Day D.A."/>
            <person name="Whelan J."/>
            <person name="Millar A.H."/>
        </authorList>
    </citation>
    <scope>IDENTIFICATION BY MASS SPECTROMETRY</scope>
    <scope>SUBCELLULAR LOCATION [LARGE SCALE ANALYSIS]</scope>
    <source>
        <strain>cv. Landsberg erecta</strain>
    </source>
</reference>
<reference key="6">
    <citation type="journal article" date="2004" name="Plant J.">
        <title>The Arabidopsis FtsH metalloprotease gene family: interchangeability of subunits in chloroplast oligomeric complexes.</title>
        <authorList>
            <person name="Yu F."/>
            <person name="Park S."/>
            <person name="Rodermel S.R."/>
        </authorList>
    </citation>
    <scope>GENE FAMILY</scope>
    <scope>NOMENCLATURE</scope>
</reference>
<reference key="7">
    <citation type="journal article" date="2004" name="Plant Physiol.">
        <title>Expression in multigene families. Analysis of chloroplast and mitochondrial proteases.</title>
        <authorList>
            <person name="Sinvany-Villalobo G."/>
            <person name="Davydov O."/>
            <person name="Ben-Ari G."/>
            <person name="Zaltsman A."/>
            <person name="Raskind A."/>
            <person name="Adam Z."/>
        </authorList>
    </citation>
    <scope>INDUCTION BY HIGH LIGHT</scope>
</reference>
<reference key="8">
    <citation type="journal article" date="2005" name="Plant Mol. Biol.">
        <title>Plant mitochondria contain at least two i-AAA-like complexes.</title>
        <authorList>
            <person name="Urantowka A."/>
            <person name="Knorpp C."/>
            <person name="Olczak T."/>
            <person name="Kolodziejczak M."/>
            <person name="Janska H."/>
        </authorList>
    </citation>
    <scope>SUBUNIT</scope>
    <scope>SUBCELLULAR LOCATION</scope>
</reference>
<reference key="9">
    <citation type="journal article" date="2005" name="Proc. Natl. Acad. Sci. U.S.A.">
        <title>AtFtsH6 is involved in the degradation of the light-harvesting complex II during high-light acclimation and senescence.</title>
        <authorList>
            <person name="Zelisko A."/>
            <person name="Garcia-Lorenzo M."/>
            <person name="Jackowski G."/>
            <person name="Jansson S."/>
            <person name="Funk C."/>
        </authorList>
    </citation>
    <scope>FUNCTION</scope>
</reference>
<reference key="10">
    <citation type="journal article" date="2006" name="Plant J.">
        <title>FtsH11 protease plays a critical role in Arabidopsis thermotolerance.</title>
        <authorList>
            <person name="Chen J."/>
            <person name="Burke J.J."/>
            <person name="Velten J."/>
            <person name="Xin Z."/>
        </authorList>
    </citation>
    <scope>FUNCTION</scope>
    <scope>MUTAGENESIS OF GLY-564</scope>
</reference>
<reference key="11">
    <citation type="journal article" date="2007" name="Physiol. Plantarum">
        <title>The significance of Arabidopsis AAA proteases for activity and assembly/stability of mitochondrial OXPHOS complexes.</title>
        <authorList>
            <person name="Kolodziejczak M."/>
            <person name="Gibala M."/>
            <person name="Urantowka A."/>
            <person name="Janska H."/>
        </authorList>
    </citation>
    <scope>FUNCTION</scope>
    <scope>SUBCELLULAR LOCATION</scope>
</reference>
<reference key="12">
    <citation type="journal article" date="2009" name="J. Proteomics">
        <title>Phosphoproteomic analysis of nuclei-enriched fractions from Arabidopsis thaliana.</title>
        <authorList>
            <person name="Jones A.M.E."/>
            <person name="MacLean D."/>
            <person name="Studholme D.J."/>
            <person name="Serna-Sanz A."/>
            <person name="Andreasson E."/>
            <person name="Rathjen J.P."/>
            <person name="Peck S.C."/>
        </authorList>
    </citation>
    <scope>IDENTIFICATION BY MASS SPECTROMETRY [LARGE SCALE ANALYSIS]</scope>
    <source>
        <strain>cv. Columbia</strain>
    </source>
</reference>
<reference key="13">
    <citation type="journal article" date="2009" name="Plant Physiol.">
        <title>Large-scale Arabidopsis phosphoproteome profiling reveals novel chloroplast kinase substrates and phosphorylation networks.</title>
        <authorList>
            <person name="Reiland S."/>
            <person name="Messerli G."/>
            <person name="Baerenfaller K."/>
            <person name="Gerrits B."/>
            <person name="Endler A."/>
            <person name="Grossmann J."/>
            <person name="Gruissem W."/>
            <person name="Baginsky S."/>
        </authorList>
    </citation>
    <scope>IDENTIFICATION BY MASS SPECTROMETRY [LARGE SCALE ANALYSIS]</scope>
</reference>
<organism>
    <name type="scientific">Arabidopsis thaliana</name>
    <name type="common">Mouse-ear cress</name>
    <dbReference type="NCBI Taxonomy" id="3702"/>
    <lineage>
        <taxon>Eukaryota</taxon>
        <taxon>Viridiplantae</taxon>
        <taxon>Streptophyta</taxon>
        <taxon>Embryophyta</taxon>
        <taxon>Tracheophyta</taxon>
        <taxon>Spermatophyta</taxon>
        <taxon>Magnoliopsida</taxon>
        <taxon>eudicotyledons</taxon>
        <taxon>Gunneridae</taxon>
        <taxon>Pentapetalae</taxon>
        <taxon>rosids</taxon>
        <taxon>malvids</taxon>
        <taxon>Brassicales</taxon>
        <taxon>Brassicaceae</taxon>
        <taxon>Camelineae</taxon>
        <taxon>Arabidopsis</taxon>
    </lineage>
</organism>
<accession>Q9FGM0</accession>
<name>FTSHB_ARATH</name>
<feature type="transit peptide" description="Chloroplast and mitochondrion" evidence="2">
    <location>
        <begin position="1"/>
        <end position="63"/>
    </location>
</feature>
<feature type="chain" id="PRO_0000341336" description="ATP-dependent zinc metalloprotease FTSH 11, chloroplastic/mitochondrial">
    <location>
        <begin position="64"/>
        <end position="806"/>
    </location>
</feature>
<feature type="transmembrane region" description="Helical" evidence="2">
    <location>
        <begin position="301"/>
        <end position="321"/>
    </location>
</feature>
<feature type="region of interest" description="Disordered" evidence="3">
    <location>
        <begin position="106"/>
        <end position="130"/>
    </location>
</feature>
<feature type="compositionally biased region" description="Basic and acidic residues" evidence="3">
    <location>
        <begin position="106"/>
        <end position="116"/>
    </location>
</feature>
<feature type="active site" evidence="1">
    <location>
        <position position="621"/>
    </location>
</feature>
<feature type="binding site" evidence="2">
    <location>
        <begin position="402"/>
        <end position="409"/>
    </location>
    <ligand>
        <name>ATP</name>
        <dbReference type="ChEBI" id="CHEBI:30616"/>
    </ligand>
</feature>
<feature type="binding site" evidence="1">
    <location>
        <position position="620"/>
    </location>
    <ligand>
        <name>Zn(2+)</name>
        <dbReference type="ChEBI" id="CHEBI:29105"/>
        <note>catalytic</note>
    </ligand>
</feature>
<feature type="binding site" evidence="1">
    <location>
        <position position="624"/>
    </location>
    <ligand>
        <name>Zn(2+)</name>
        <dbReference type="ChEBI" id="CHEBI:29105"/>
        <note>catalytic</note>
    </ligand>
</feature>
<feature type="binding site" evidence="1">
    <location>
        <position position="698"/>
    </location>
    <ligand>
        <name>Zn(2+)</name>
        <dbReference type="ChEBI" id="CHEBI:29105"/>
        <note>catalytic</note>
    </ligand>
</feature>
<feature type="mutagenesis site" description="In atts244; loss of thermotolerance." evidence="6">
    <original>G</original>
    <variation>A</variation>
    <location>
        <position position="564"/>
    </location>
</feature>
<keyword id="KW-0067">ATP-binding</keyword>
<keyword id="KW-0150">Chloroplast</keyword>
<keyword id="KW-0378">Hydrolase</keyword>
<keyword id="KW-0472">Membrane</keyword>
<keyword id="KW-0479">Metal-binding</keyword>
<keyword id="KW-0482">Metalloprotease</keyword>
<keyword id="KW-0496">Mitochondrion</keyword>
<keyword id="KW-0999">Mitochondrion inner membrane</keyword>
<keyword id="KW-0547">Nucleotide-binding</keyword>
<keyword id="KW-0934">Plastid</keyword>
<keyword id="KW-0645">Protease</keyword>
<keyword id="KW-1185">Reference proteome</keyword>
<keyword id="KW-0793">Thylakoid</keyword>
<keyword id="KW-0809">Transit peptide</keyword>
<keyword id="KW-0812">Transmembrane</keyword>
<keyword id="KW-1133">Transmembrane helix</keyword>
<keyword id="KW-0862">Zinc</keyword>
<gene>
    <name type="primary">FTSH11</name>
    <name type="ordered locus">At5g53170</name>
    <name type="ORF">MFH8.11</name>
</gene>
<sequence length="806" mass="88717">MSSSTLQASLFLRPPLHTSSFKLYPCLFSSSSLSFCPQSLSSFYRLSSVLHNSRFRPLPCSLRQDNVASDSDFIPKDSAFEVTDSAESNRLVSDTEVSELETNDRFVGGEETKSGGEEAEVSNGVTEGKEEDQKKSKFRIVVLMMALWAAIKRAIEKVMEWEWLSWWPFSRQEKRLEKLIAEADANPKDAALQGALLAELNKHIPEAVVQRFEQREHTVDSRGVAEYIRALVITNAISEYLPDEQTGKPSSLPALLQELKHRASGNMDESFVNPGISEKQPLHVTMVNPKVSNKSRFAQELVSTILFTVAVGLVWIMGAAALQKYIGSLGGIGTSGVGSSSSYSPKELNKEITPEKNVKTFKDVKGCDDAKQELEEVVEYLKNPSKFTRLGGKLPKGILLTGAPGTGKTLLAKAIAGEAGVPFFYRAGSEFEEMFVGVGARRVRSLFQAAKKKAPCIIFIDEIDAVGSTRKQWEGHTKKTLHQLLVEMDGFEQNEGIIVMAATNLPDILDPALTRPGRFDRHIVVPSPDVRGREEILELYLQGKPMSEDVDVKAIARGTPGFNGADLANLVNIAAIKAAVEGAEKLSSEQLEFAKDRIVMGTERKTMFVSEDSKKLTAYHESGHAIVALNTKGAHPIHKATIMPRGSALGMVTQLPSNDETSVSKRQLLARLDVCMGGRVAEELIFGLDHITTGASSDLSQATELAQYMVSSCGMSEAIGPVHIKERPSSDMQSRIDAEVVKLLREAYERVKSLLKRHEKQLHTLANALLEYETLTAEDIKRILLPKQEGEKFEEQQQEEGDLVLA</sequence>
<evidence type="ECO:0000250" key="1"/>
<evidence type="ECO:0000255" key="2"/>
<evidence type="ECO:0000256" key="3">
    <source>
        <dbReference type="SAM" id="MobiDB-lite"/>
    </source>
</evidence>
<evidence type="ECO:0000269" key="4">
    <source>
    </source>
</evidence>
<evidence type="ECO:0000269" key="5">
    <source>
    </source>
</evidence>
<evidence type="ECO:0000269" key="6">
    <source>
    </source>
</evidence>
<evidence type="ECO:0000269" key="7">
    <source ref="11"/>
</evidence>
<evidence type="ECO:0000305" key="8"/>
<evidence type="ECO:0000305" key="9">
    <source>
    </source>
</evidence>
<protein>
    <recommendedName>
        <fullName>ATP-dependent zinc metalloprotease FTSH 11, chloroplastic/mitochondrial</fullName>
        <shortName>AtFTSH11</shortName>
        <ecNumber>3.4.24.-</ecNumber>
    </recommendedName>
</protein>
<dbReference type="EC" id="3.4.24.-"/>
<dbReference type="EMBL" id="AB025622">
    <property type="protein sequence ID" value="BAB08420.1"/>
    <property type="molecule type" value="Genomic_DNA"/>
</dbReference>
<dbReference type="EMBL" id="CP002688">
    <property type="protein sequence ID" value="AED96317.1"/>
    <property type="molecule type" value="Genomic_DNA"/>
</dbReference>
<dbReference type="EMBL" id="AY091086">
    <property type="protein sequence ID" value="AAM13906.1"/>
    <property type="molecule type" value="mRNA"/>
</dbReference>
<dbReference type="EMBL" id="AY123027">
    <property type="protein sequence ID" value="AAM67560.1"/>
    <property type="molecule type" value="mRNA"/>
</dbReference>
<dbReference type="RefSeq" id="NP_568787.1">
    <property type="nucleotide sequence ID" value="NM_124696.4"/>
</dbReference>
<dbReference type="SMR" id="Q9FGM0"/>
<dbReference type="FunCoup" id="Q9FGM0">
    <property type="interactions" value="3622"/>
</dbReference>
<dbReference type="STRING" id="3702.Q9FGM0"/>
<dbReference type="MEROPS" id="M41.018"/>
<dbReference type="iPTMnet" id="Q9FGM0"/>
<dbReference type="PaxDb" id="3702-AT5G53170.1"/>
<dbReference type="ProteomicsDB" id="230001"/>
<dbReference type="EnsemblPlants" id="AT5G53170.1">
    <property type="protein sequence ID" value="AT5G53170.1"/>
    <property type="gene ID" value="AT5G53170"/>
</dbReference>
<dbReference type="GeneID" id="835398"/>
<dbReference type="Gramene" id="AT5G53170.1">
    <property type="protein sequence ID" value="AT5G53170.1"/>
    <property type="gene ID" value="AT5G53170"/>
</dbReference>
<dbReference type="KEGG" id="ath:AT5G53170"/>
<dbReference type="Araport" id="AT5G53170"/>
<dbReference type="TAIR" id="AT5G53170">
    <property type="gene designation" value="FTSH11"/>
</dbReference>
<dbReference type="eggNOG" id="KOG0734">
    <property type="taxonomic scope" value="Eukaryota"/>
</dbReference>
<dbReference type="HOGENOM" id="CLU_000688_9_3_1"/>
<dbReference type="InParanoid" id="Q9FGM0"/>
<dbReference type="OMA" id="KVMEWEW"/>
<dbReference type="PhylomeDB" id="Q9FGM0"/>
<dbReference type="BRENDA" id="3.4.24.B20">
    <property type="organism ID" value="399"/>
</dbReference>
<dbReference type="PRO" id="PR:Q9FGM0"/>
<dbReference type="Proteomes" id="UP000006548">
    <property type="component" value="Chromosome 5"/>
</dbReference>
<dbReference type="ExpressionAtlas" id="Q9FGM0">
    <property type="expression patterns" value="baseline and differential"/>
</dbReference>
<dbReference type="GO" id="GO:0009507">
    <property type="term" value="C:chloroplast"/>
    <property type="evidence" value="ECO:0000314"/>
    <property type="project" value="TAIR"/>
</dbReference>
<dbReference type="GO" id="GO:0009941">
    <property type="term" value="C:chloroplast envelope"/>
    <property type="evidence" value="ECO:0007005"/>
    <property type="project" value="TAIR"/>
</dbReference>
<dbReference type="GO" id="GO:0009535">
    <property type="term" value="C:chloroplast thylakoid membrane"/>
    <property type="evidence" value="ECO:0007669"/>
    <property type="project" value="UniProtKB-SubCell"/>
</dbReference>
<dbReference type="GO" id="GO:0005743">
    <property type="term" value="C:mitochondrial inner membrane"/>
    <property type="evidence" value="ECO:0007669"/>
    <property type="project" value="UniProtKB-SubCell"/>
</dbReference>
<dbReference type="GO" id="GO:0005739">
    <property type="term" value="C:mitochondrion"/>
    <property type="evidence" value="ECO:0007005"/>
    <property type="project" value="TAIR"/>
</dbReference>
<dbReference type="GO" id="GO:0009536">
    <property type="term" value="C:plastid"/>
    <property type="evidence" value="ECO:0007005"/>
    <property type="project" value="TAIR"/>
</dbReference>
<dbReference type="GO" id="GO:0005524">
    <property type="term" value="F:ATP binding"/>
    <property type="evidence" value="ECO:0007669"/>
    <property type="project" value="UniProtKB-KW"/>
</dbReference>
<dbReference type="GO" id="GO:0016887">
    <property type="term" value="F:ATP hydrolysis activity"/>
    <property type="evidence" value="ECO:0007669"/>
    <property type="project" value="InterPro"/>
</dbReference>
<dbReference type="GO" id="GO:0004176">
    <property type="term" value="F:ATP-dependent peptidase activity"/>
    <property type="evidence" value="ECO:0000250"/>
    <property type="project" value="TAIR"/>
</dbReference>
<dbReference type="GO" id="GO:0046872">
    <property type="term" value="F:metal ion binding"/>
    <property type="evidence" value="ECO:0007669"/>
    <property type="project" value="UniProtKB-KW"/>
</dbReference>
<dbReference type="GO" id="GO:0004222">
    <property type="term" value="F:metalloendopeptidase activity"/>
    <property type="evidence" value="ECO:0007669"/>
    <property type="project" value="InterPro"/>
</dbReference>
<dbReference type="GO" id="GO:0006508">
    <property type="term" value="P:proteolysis"/>
    <property type="evidence" value="ECO:0007669"/>
    <property type="project" value="UniProtKB-KW"/>
</dbReference>
<dbReference type="GO" id="GO:0010304">
    <property type="term" value="P:PSII associated light-harvesting complex II catabolic process"/>
    <property type="evidence" value="ECO:0000304"/>
    <property type="project" value="TAIR"/>
</dbReference>
<dbReference type="GO" id="GO:0009408">
    <property type="term" value="P:response to heat"/>
    <property type="evidence" value="ECO:0000315"/>
    <property type="project" value="TAIR"/>
</dbReference>
<dbReference type="CDD" id="cd19501">
    <property type="entry name" value="RecA-like_FtsH"/>
    <property type="match status" value="1"/>
</dbReference>
<dbReference type="FunFam" id="1.10.8.60:FF:000001">
    <property type="entry name" value="ATP-dependent zinc metalloprotease FtsH"/>
    <property type="match status" value="1"/>
</dbReference>
<dbReference type="FunFam" id="1.20.58.760:FF:000002">
    <property type="entry name" value="ATP-dependent zinc metalloprotease FtsH"/>
    <property type="match status" value="1"/>
</dbReference>
<dbReference type="FunFam" id="3.40.50.300:FF:000195">
    <property type="entry name" value="ATP-dependent zinc metalloprotease FTSH 11"/>
    <property type="match status" value="1"/>
</dbReference>
<dbReference type="Gene3D" id="1.10.8.60">
    <property type="match status" value="1"/>
</dbReference>
<dbReference type="Gene3D" id="3.40.50.300">
    <property type="entry name" value="P-loop containing nucleotide triphosphate hydrolases"/>
    <property type="match status" value="1"/>
</dbReference>
<dbReference type="Gene3D" id="1.20.58.760">
    <property type="entry name" value="Peptidase M41"/>
    <property type="match status" value="1"/>
</dbReference>
<dbReference type="HAMAP" id="MF_01458">
    <property type="entry name" value="FtsH"/>
    <property type="match status" value="1"/>
</dbReference>
<dbReference type="InterPro" id="IPR003593">
    <property type="entry name" value="AAA+_ATPase"/>
</dbReference>
<dbReference type="InterPro" id="IPR041569">
    <property type="entry name" value="AAA_lid_3"/>
</dbReference>
<dbReference type="InterPro" id="IPR003959">
    <property type="entry name" value="ATPase_AAA_core"/>
</dbReference>
<dbReference type="InterPro" id="IPR003960">
    <property type="entry name" value="ATPase_AAA_CS"/>
</dbReference>
<dbReference type="InterPro" id="IPR005936">
    <property type="entry name" value="FtsH"/>
</dbReference>
<dbReference type="InterPro" id="IPR027417">
    <property type="entry name" value="P-loop_NTPase"/>
</dbReference>
<dbReference type="InterPro" id="IPR000642">
    <property type="entry name" value="Peptidase_M41"/>
</dbReference>
<dbReference type="InterPro" id="IPR037219">
    <property type="entry name" value="Peptidase_M41-like"/>
</dbReference>
<dbReference type="NCBIfam" id="TIGR01241">
    <property type="entry name" value="FtsH_fam"/>
    <property type="match status" value="1"/>
</dbReference>
<dbReference type="PANTHER" id="PTHR23076:SF97">
    <property type="entry name" value="ATP-DEPENDENT ZINC METALLOPROTEASE YME1L1"/>
    <property type="match status" value="1"/>
</dbReference>
<dbReference type="PANTHER" id="PTHR23076">
    <property type="entry name" value="METALLOPROTEASE M41 FTSH"/>
    <property type="match status" value="1"/>
</dbReference>
<dbReference type="Pfam" id="PF00004">
    <property type="entry name" value="AAA"/>
    <property type="match status" value="1"/>
</dbReference>
<dbReference type="Pfam" id="PF17862">
    <property type="entry name" value="AAA_lid_3"/>
    <property type="match status" value="1"/>
</dbReference>
<dbReference type="Pfam" id="PF01434">
    <property type="entry name" value="Peptidase_M41"/>
    <property type="match status" value="1"/>
</dbReference>
<dbReference type="SMART" id="SM00382">
    <property type="entry name" value="AAA"/>
    <property type="match status" value="1"/>
</dbReference>
<dbReference type="SUPFAM" id="SSF140990">
    <property type="entry name" value="FtsH protease domain-like"/>
    <property type="match status" value="1"/>
</dbReference>
<dbReference type="SUPFAM" id="SSF52540">
    <property type="entry name" value="P-loop containing nucleoside triphosphate hydrolases"/>
    <property type="match status" value="1"/>
</dbReference>
<dbReference type="PROSITE" id="PS00674">
    <property type="entry name" value="AAA"/>
    <property type="match status" value="1"/>
</dbReference>
<proteinExistence type="evidence at protein level"/>